<accession>Q9C627</accession>
<protein>
    <recommendedName>
        <fullName>Putative F-box protein At1g46984</fullName>
    </recommendedName>
</protein>
<organism>
    <name type="scientific">Arabidopsis thaliana</name>
    <name type="common">Mouse-ear cress</name>
    <dbReference type="NCBI Taxonomy" id="3702"/>
    <lineage>
        <taxon>Eukaryota</taxon>
        <taxon>Viridiplantae</taxon>
        <taxon>Streptophyta</taxon>
        <taxon>Embryophyta</taxon>
        <taxon>Tracheophyta</taxon>
        <taxon>Spermatophyta</taxon>
        <taxon>Magnoliopsida</taxon>
        <taxon>eudicotyledons</taxon>
        <taxon>Gunneridae</taxon>
        <taxon>Pentapetalae</taxon>
        <taxon>rosids</taxon>
        <taxon>malvids</taxon>
        <taxon>Brassicales</taxon>
        <taxon>Brassicaceae</taxon>
        <taxon>Camelineae</taxon>
        <taxon>Arabidopsis</taxon>
    </lineage>
</organism>
<sequence length="370" mass="43130">MNRRKNDFLVRPKRIRCYTQLSTLPIDLIIEILSRLPMNSIAICRLVSKQWASILQSSDFTESFLIKSPPRPRLLFTIRYGSKWHLFSAPQPRNFDENFPVVATDYHKGFSGNWCMQSFQLVNGFIYLNNRLSLKGKIDRVSVIWNPSTGQQIPLPDLGVKNSHSKSFFGYDPIEKQFKVLCITSSKEHQVLTLGTGRKLSWRKIEYSYPHYPRKKSNGICINGVLYYRNTNAMIVRFDVRSEEFRFVEIKMYVEILSLINYKGKLGVLFPNTDLAQLWVLDDTNKVEWSKHNFVFPDTTFEAIRATDTGEMFCASSCWRDSLYVSYYDLEKESVKKVKIKGIEDKLSIGKHHANEFFIFPNHVENVMVL</sequence>
<dbReference type="EMBL" id="AC083835">
    <property type="protein sequence ID" value="AAG50624.1"/>
    <property type="molecule type" value="Genomic_DNA"/>
</dbReference>
<dbReference type="EMBL" id="CP002684">
    <property type="protein sequence ID" value="AEE32133.1"/>
    <property type="molecule type" value="Genomic_DNA"/>
</dbReference>
<dbReference type="PIR" id="C96512">
    <property type="entry name" value="C96512"/>
</dbReference>
<dbReference type="RefSeq" id="NP_175150.1">
    <property type="nucleotide sequence ID" value="NM_103610.1"/>
</dbReference>
<dbReference type="SMR" id="Q9C627"/>
<dbReference type="FunCoup" id="Q9C627">
    <property type="interactions" value="41"/>
</dbReference>
<dbReference type="PaxDb" id="3702-AT1G46984.1"/>
<dbReference type="EnsemblPlants" id="AT1G46984.1">
    <property type="protein sequence ID" value="AT1G46984.1"/>
    <property type="gene ID" value="AT1G46984"/>
</dbReference>
<dbReference type="GeneID" id="841120"/>
<dbReference type="Gramene" id="AT1G46984.1">
    <property type="protein sequence ID" value="AT1G46984.1"/>
    <property type="gene ID" value="AT1G46984"/>
</dbReference>
<dbReference type="KEGG" id="ath:AT1G46984"/>
<dbReference type="Araport" id="AT1G46984"/>
<dbReference type="TAIR" id="AT1G46984"/>
<dbReference type="eggNOG" id="ENOG502SNHU">
    <property type="taxonomic scope" value="Eukaryota"/>
</dbReference>
<dbReference type="HOGENOM" id="CLU_027176_8_1_1"/>
<dbReference type="InParanoid" id="Q9C627"/>
<dbReference type="OMA" id="AFWIMRS"/>
<dbReference type="PhylomeDB" id="Q9C627"/>
<dbReference type="PRO" id="PR:Q9C627"/>
<dbReference type="Proteomes" id="UP000006548">
    <property type="component" value="Chromosome 1"/>
</dbReference>
<dbReference type="CDD" id="cd22157">
    <property type="entry name" value="F-box_AtFBW1-like"/>
    <property type="match status" value="1"/>
</dbReference>
<dbReference type="Gene3D" id="1.20.1280.50">
    <property type="match status" value="1"/>
</dbReference>
<dbReference type="InterPro" id="IPR013187">
    <property type="entry name" value="F-box-assoc_dom_typ3"/>
</dbReference>
<dbReference type="InterPro" id="IPR017451">
    <property type="entry name" value="F-box-assoc_interact_dom"/>
</dbReference>
<dbReference type="InterPro" id="IPR036047">
    <property type="entry name" value="F-box-like_dom_sf"/>
</dbReference>
<dbReference type="InterPro" id="IPR001810">
    <property type="entry name" value="F-box_dom"/>
</dbReference>
<dbReference type="NCBIfam" id="TIGR01640">
    <property type="entry name" value="F_box_assoc_1"/>
    <property type="match status" value="1"/>
</dbReference>
<dbReference type="PANTHER" id="PTHR31111">
    <property type="entry name" value="BNAA05G37150D PROTEIN-RELATED"/>
    <property type="match status" value="1"/>
</dbReference>
<dbReference type="PANTHER" id="PTHR31111:SF114">
    <property type="entry name" value="F-BOX ASSOCIATED UBIQUITINATION EFFECTOR FAMILY PROTEIN-RELATED"/>
    <property type="match status" value="1"/>
</dbReference>
<dbReference type="Pfam" id="PF00646">
    <property type="entry name" value="F-box"/>
    <property type="match status" value="1"/>
</dbReference>
<dbReference type="Pfam" id="PF08268">
    <property type="entry name" value="FBA_3"/>
    <property type="match status" value="1"/>
</dbReference>
<dbReference type="SMART" id="SM00256">
    <property type="entry name" value="FBOX"/>
    <property type="match status" value="1"/>
</dbReference>
<dbReference type="SUPFAM" id="SSF81383">
    <property type="entry name" value="F-box domain"/>
    <property type="match status" value="1"/>
</dbReference>
<dbReference type="PROSITE" id="PS50181">
    <property type="entry name" value="FBOX"/>
    <property type="match status" value="1"/>
</dbReference>
<proteinExistence type="predicted"/>
<name>FB36_ARATH</name>
<reference key="1">
    <citation type="journal article" date="2000" name="Nature">
        <title>Sequence and analysis of chromosome 1 of the plant Arabidopsis thaliana.</title>
        <authorList>
            <person name="Theologis A."/>
            <person name="Ecker J.R."/>
            <person name="Palm C.J."/>
            <person name="Federspiel N.A."/>
            <person name="Kaul S."/>
            <person name="White O."/>
            <person name="Alonso J."/>
            <person name="Altafi H."/>
            <person name="Araujo R."/>
            <person name="Bowman C.L."/>
            <person name="Brooks S.Y."/>
            <person name="Buehler E."/>
            <person name="Chan A."/>
            <person name="Chao Q."/>
            <person name="Chen H."/>
            <person name="Cheuk R.F."/>
            <person name="Chin C.W."/>
            <person name="Chung M.K."/>
            <person name="Conn L."/>
            <person name="Conway A.B."/>
            <person name="Conway A.R."/>
            <person name="Creasy T.H."/>
            <person name="Dewar K."/>
            <person name="Dunn P."/>
            <person name="Etgu P."/>
            <person name="Feldblyum T.V."/>
            <person name="Feng J.-D."/>
            <person name="Fong B."/>
            <person name="Fujii C.Y."/>
            <person name="Gill J.E."/>
            <person name="Goldsmith A.D."/>
            <person name="Haas B."/>
            <person name="Hansen N.F."/>
            <person name="Hughes B."/>
            <person name="Huizar L."/>
            <person name="Hunter J.L."/>
            <person name="Jenkins J."/>
            <person name="Johnson-Hopson C."/>
            <person name="Khan S."/>
            <person name="Khaykin E."/>
            <person name="Kim C.J."/>
            <person name="Koo H.L."/>
            <person name="Kremenetskaia I."/>
            <person name="Kurtz D.B."/>
            <person name="Kwan A."/>
            <person name="Lam B."/>
            <person name="Langin-Hooper S."/>
            <person name="Lee A."/>
            <person name="Lee J.M."/>
            <person name="Lenz C.A."/>
            <person name="Li J.H."/>
            <person name="Li Y.-P."/>
            <person name="Lin X."/>
            <person name="Liu S.X."/>
            <person name="Liu Z.A."/>
            <person name="Luros J.S."/>
            <person name="Maiti R."/>
            <person name="Marziali A."/>
            <person name="Militscher J."/>
            <person name="Miranda M."/>
            <person name="Nguyen M."/>
            <person name="Nierman W.C."/>
            <person name="Osborne B.I."/>
            <person name="Pai G."/>
            <person name="Peterson J."/>
            <person name="Pham P.K."/>
            <person name="Rizzo M."/>
            <person name="Rooney T."/>
            <person name="Rowley D."/>
            <person name="Sakano H."/>
            <person name="Salzberg S.L."/>
            <person name="Schwartz J.R."/>
            <person name="Shinn P."/>
            <person name="Southwick A.M."/>
            <person name="Sun H."/>
            <person name="Tallon L.J."/>
            <person name="Tambunga G."/>
            <person name="Toriumi M.J."/>
            <person name="Town C.D."/>
            <person name="Utterback T."/>
            <person name="Van Aken S."/>
            <person name="Vaysberg M."/>
            <person name="Vysotskaia V.S."/>
            <person name="Walker M."/>
            <person name="Wu D."/>
            <person name="Yu G."/>
            <person name="Fraser C.M."/>
            <person name="Venter J.C."/>
            <person name="Davis R.W."/>
        </authorList>
    </citation>
    <scope>NUCLEOTIDE SEQUENCE [LARGE SCALE GENOMIC DNA]</scope>
    <source>
        <strain>cv. Columbia</strain>
    </source>
</reference>
<reference key="2">
    <citation type="journal article" date="2017" name="Plant J.">
        <title>Araport11: a complete reannotation of the Arabidopsis thaliana reference genome.</title>
        <authorList>
            <person name="Cheng C.Y."/>
            <person name="Krishnakumar V."/>
            <person name="Chan A.P."/>
            <person name="Thibaud-Nissen F."/>
            <person name="Schobel S."/>
            <person name="Town C.D."/>
        </authorList>
    </citation>
    <scope>GENOME REANNOTATION</scope>
    <source>
        <strain>cv. Columbia</strain>
    </source>
</reference>
<keyword id="KW-1185">Reference proteome</keyword>
<evidence type="ECO:0000255" key="1">
    <source>
        <dbReference type="PROSITE-ProRule" id="PRU00080"/>
    </source>
</evidence>
<gene>
    <name type="ordered locus">At1g46984</name>
    <name type="ORF">F2G19.21</name>
</gene>
<feature type="chain" id="PRO_0000283312" description="Putative F-box protein At1g46984">
    <location>
        <begin position="1"/>
        <end position="370"/>
    </location>
</feature>
<feature type="domain" description="F-box" evidence="1">
    <location>
        <begin position="18"/>
        <end position="64"/>
    </location>
</feature>